<keyword id="KW-0030">Aminoacyl-tRNA synthetase</keyword>
<keyword id="KW-0067">ATP-binding</keyword>
<keyword id="KW-0963">Cytoplasm</keyword>
<keyword id="KW-0436">Ligase</keyword>
<keyword id="KW-0547">Nucleotide-binding</keyword>
<keyword id="KW-0648">Protein biosynthesis</keyword>
<keyword id="KW-1185">Reference proteome</keyword>
<organism>
    <name type="scientific">Limosilactobacillus fermentum (strain NBRC 3956 / LMG 18251)</name>
    <name type="common">Lactobacillus fermentum</name>
    <dbReference type="NCBI Taxonomy" id="334390"/>
    <lineage>
        <taxon>Bacteria</taxon>
        <taxon>Bacillati</taxon>
        <taxon>Bacillota</taxon>
        <taxon>Bacilli</taxon>
        <taxon>Lactobacillales</taxon>
        <taxon>Lactobacillaceae</taxon>
        <taxon>Limosilactobacillus</taxon>
    </lineage>
</organism>
<name>SYD_LIMF3</name>
<gene>
    <name evidence="1" type="primary">aspS</name>
    <name type="ordered locus">LAF_0833</name>
</gene>
<protein>
    <recommendedName>
        <fullName evidence="1">Aspartate--tRNA ligase</fullName>
        <ecNumber evidence="1">6.1.1.12</ecNumber>
    </recommendedName>
    <alternativeName>
        <fullName evidence="1">Aspartyl-tRNA synthetase</fullName>
        <shortName evidence="1">AspRS</shortName>
    </alternativeName>
</protein>
<dbReference type="EC" id="6.1.1.12" evidence="1"/>
<dbReference type="EMBL" id="AP008937">
    <property type="protein sequence ID" value="BAG27169.1"/>
    <property type="molecule type" value="Genomic_DNA"/>
</dbReference>
<dbReference type="RefSeq" id="WP_012391171.1">
    <property type="nucleotide sequence ID" value="NC_010610.1"/>
</dbReference>
<dbReference type="SMR" id="B2GBY7"/>
<dbReference type="GeneID" id="83714782"/>
<dbReference type="KEGG" id="lfe:LAF_0833"/>
<dbReference type="eggNOG" id="COG0173">
    <property type="taxonomic scope" value="Bacteria"/>
</dbReference>
<dbReference type="HOGENOM" id="CLU_014330_3_2_9"/>
<dbReference type="Proteomes" id="UP000001697">
    <property type="component" value="Chromosome"/>
</dbReference>
<dbReference type="GO" id="GO:0005737">
    <property type="term" value="C:cytoplasm"/>
    <property type="evidence" value="ECO:0007669"/>
    <property type="project" value="UniProtKB-SubCell"/>
</dbReference>
<dbReference type="GO" id="GO:0004815">
    <property type="term" value="F:aspartate-tRNA ligase activity"/>
    <property type="evidence" value="ECO:0007669"/>
    <property type="project" value="UniProtKB-UniRule"/>
</dbReference>
<dbReference type="GO" id="GO:0005524">
    <property type="term" value="F:ATP binding"/>
    <property type="evidence" value="ECO:0007669"/>
    <property type="project" value="UniProtKB-UniRule"/>
</dbReference>
<dbReference type="GO" id="GO:0140096">
    <property type="term" value="F:catalytic activity, acting on a protein"/>
    <property type="evidence" value="ECO:0007669"/>
    <property type="project" value="UniProtKB-ARBA"/>
</dbReference>
<dbReference type="GO" id="GO:0003676">
    <property type="term" value="F:nucleic acid binding"/>
    <property type="evidence" value="ECO:0007669"/>
    <property type="project" value="InterPro"/>
</dbReference>
<dbReference type="GO" id="GO:0016740">
    <property type="term" value="F:transferase activity"/>
    <property type="evidence" value="ECO:0007669"/>
    <property type="project" value="UniProtKB-ARBA"/>
</dbReference>
<dbReference type="GO" id="GO:0006422">
    <property type="term" value="P:aspartyl-tRNA aminoacylation"/>
    <property type="evidence" value="ECO:0007669"/>
    <property type="project" value="UniProtKB-UniRule"/>
</dbReference>
<dbReference type="CDD" id="cd00777">
    <property type="entry name" value="AspRS_core"/>
    <property type="match status" value="1"/>
</dbReference>
<dbReference type="CDD" id="cd04317">
    <property type="entry name" value="EcAspRS_like_N"/>
    <property type="match status" value="1"/>
</dbReference>
<dbReference type="Gene3D" id="3.30.930.10">
    <property type="entry name" value="Bira Bifunctional Protein, Domain 2"/>
    <property type="match status" value="1"/>
</dbReference>
<dbReference type="Gene3D" id="3.30.1360.30">
    <property type="entry name" value="GAD-like domain"/>
    <property type="match status" value="1"/>
</dbReference>
<dbReference type="Gene3D" id="2.40.50.140">
    <property type="entry name" value="Nucleic acid-binding proteins"/>
    <property type="match status" value="1"/>
</dbReference>
<dbReference type="HAMAP" id="MF_00044">
    <property type="entry name" value="Asp_tRNA_synth_type1"/>
    <property type="match status" value="1"/>
</dbReference>
<dbReference type="InterPro" id="IPR004364">
    <property type="entry name" value="Aa-tRNA-synt_II"/>
</dbReference>
<dbReference type="InterPro" id="IPR006195">
    <property type="entry name" value="aa-tRNA-synth_II"/>
</dbReference>
<dbReference type="InterPro" id="IPR045864">
    <property type="entry name" value="aa-tRNA-synth_II/BPL/LPL"/>
</dbReference>
<dbReference type="InterPro" id="IPR004524">
    <property type="entry name" value="Asp-tRNA-ligase_1"/>
</dbReference>
<dbReference type="InterPro" id="IPR047089">
    <property type="entry name" value="Asp-tRNA-ligase_1_N"/>
</dbReference>
<dbReference type="InterPro" id="IPR002312">
    <property type="entry name" value="Asp/Asn-tRNA-synth_IIb"/>
</dbReference>
<dbReference type="InterPro" id="IPR047090">
    <property type="entry name" value="AspRS_core"/>
</dbReference>
<dbReference type="InterPro" id="IPR004115">
    <property type="entry name" value="GAD-like_sf"/>
</dbReference>
<dbReference type="InterPro" id="IPR029351">
    <property type="entry name" value="GAD_dom"/>
</dbReference>
<dbReference type="InterPro" id="IPR012340">
    <property type="entry name" value="NA-bd_OB-fold"/>
</dbReference>
<dbReference type="InterPro" id="IPR004365">
    <property type="entry name" value="NA-bd_OB_tRNA"/>
</dbReference>
<dbReference type="NCBIfam" id="TIGR00459">
    <property type="entry name" value="aspS_bact"/>
    <property type="match status" value="1"/>
</dbReference>
<dbReference type="NCBIfam" id="NF001750">
    <property type="entry name" value="PRK00476.1"/>
    <property type="match status" value="1"/>
</dbReference>
<dbReference type="PANTHER" id="PTHR22594:SF5">
    <property type="entry name" value="ASPARTATE--TRNA LIGASE, MITOCHONDRIAL"/>
    <property type="match status" value="1"/>
</dbReference>
<dbReference type="PANTHER" id="PTHR22594">
    <property type="entry name" value="ASPARTYL/LYSYL-TRNA SYNTHETASE"/>
    <property type="match status" value="1"/>
</dbReference>
<dbReference type="Pfam" id="PF02938">
    <property type="entry name" value="GAD"/>
    <property type="match status" value="1"/>
</dbReference>
<dbReference type="Pfam" id="PF00152">
    <property type="entry name" value="tRNA-synt_2"/>
    <property type="match status" value="1"/>
</dbReference>
<dbReference type="Pfam" id="PF01336">
    <property type="entry name" value="tRNA_anti-codon"/>
    <property type="match status" value="1"/>
</dbReference>
<dbReference type="PRINTS" id="PR01042">
    <property type="entry name" value="TRNASYNTHASP"/>
</dbReference>
<dbReference type="SUPFAM" id="SSF55681">
    <property type="entry name" value="Class II aaRS and biotin synthetases"/>
    <property type="match status" value="1"/>
</dbReference>
<dbReference type="SUPFAM" id="SSF55261">
    <property type="entry name" value="GAD domain-like"/>
    <property type="match status" value="1"/>
</dbReference>
<dbReference type="SUPFAM" id="SSF50249">
    <property type="entry name" value="Nucleic acid-binding proteins"/>
    <property type="match status" value="1"/>
</dbReference>
<dbReference type="PROSITE" id="PS50862">
    <property type="entry name" value="AA_TRNA_LIGASE_II"/>
    <property type="match status" value="1"/>
</dbReference>
<comment type="function">
    <text evidence="1">Catalyzes the attachment of L-aspartate to tRNA(Asp) in a two-step reaction: L-aspartate is first activated by ATP to form Asp-AMP and then transferred to the acceptor end of tRNA(Asp).</text>
</comment>
<comment type="catalytic activity">
    <reaction evidence="1">
        <text>tRNA(Asp) + L-aspartate + ATP = L-aspartyl-tRNA(Asp) + AMP + diphosphate</text>
        <dbReference type="Rhea" id="RHEA:19649"/>
        <dbReference type="Rhea" id="RHEA-COMP:9660"/>
        <dbReference type="Rhea" id="RHEA-COMP:9678"/>
        <dbReference type="ChEBI" id="CHEBI:29991"/>
        <dbReference type="ChEBI" id="CHEBI:30616"/>
        <dbReference type="ChEBI" id="CHEBI:33019"/>
        <dbReference type="ChEBI" id="CHEBI:78442"/>
        <dbReference type="ChEBI" id="CHEBI:78516"/>
        <dbReference type="ChEBI" id="CHEBI:456215"/>
        <dbReference type="EC" id="6.1.1.12"/>
    </reaction>
</comment>
<comment type="subunit">
    <text evidence="1">Homodimer.</text>
</comment>
<comment type="subcellular location">
    <subcellularLocation>
        <location evidence="1">Cytoplasm</location>
    </subcellularLocation>
</comment>
<comment type="similarity">
    <text evidence="1">Belongs to the class-II aminoacyl-tRNA synthetase family. Type 1 subfamily.</text>
</comment>
<sequence length="591" mass="66935">MKRTNYAGRTSEEQIGQEVVVKGWVAKRRNLGGLIFIDLWDREGIVQLVFNEEEDQAAFEVANQARNQYILEARGLVRARAEVNPDIATGKIEIEVKEAKILAKSQTPPFEVQDDVDASEDLRLKYRYVDLRRPKMMNYLKLRSKVTSIVHNYFDNNDFLDVETPELTRSTPEGARDYIVPSRVYPGHFYALPQSPQLFKQLLMAAGVDKYYQIAKCFRDEDLRGDRQPEFTQIDTEMSFAEPEEIQAMAEGLIKRVMKEAVGVDVPTPFPRMEWQEAMDKYGSDKPDTRFDMLIQDVSDLVKDSSFKVFSATVADGNFVRAIVVPGGADKYSRKDITKKEDYIKRYGAKGLAWVKVTEEGYNGPVAKFLNDDANALNERLSAKVGDLVLFVAGSFHVVCDSLGYLRESIAKELDLIDENKFNYLWVINWPMFEYDEGFGKWIAAHHPFTMLNEDDLKYLEEGEDPHQAHAQSYDIVLNGNEIGGGSIRIHDPEVQEKVFKALGYTKEAAQARFGFLIKALENGMPPEGGMAFGLDRWVMLLAHADSIRDVIAFPKNSKAVEPLTAAPGTVDDEQLEVLHLNVEEAPKEAE</sequence>
<proteinExistence type="inferred from homology"/>
<accession>B2GBY7</accession>
<reference key="1">
    <citation type="journal article" date="2008" name="DNA Res.">
        <title>Comparative genome analysis of Lactobacillus reuteri and Lactobacillus fermentum reveal a genomic island for reuterin and cobalamin production.</title>
        <authorList>
            <person name="Morita H."/>
            <person name="Toh H."/>
            <person name="Fukuda S."/>
            <person name="Horikawa H."/>
            <person name="Oshima K."/>
            <person name="Suzuki T."/>
            <person name="Murakami M."/>
            <person name="Hisamatsu S."/>
            <person name="Kato Y."/>
            <person name="Takizawa T."/>
            <person name="Fukuoka H."/>
            <person name="Yoshimura T."/>
            <person name="Itoh K."/>
            <person name="O'Sullivan D.J."/>
            <person name="McKay L.L."/>
            <person name="Ohno H."/>
            <person name="Kikuchi J."/>
            <person name="Masaoka T."/>
            <person name="Hattori M."/>
        </authorList>
    </citation>
    <scope>NUCLEOTIDE SEQUENCE [LARGE SCALE GENOMIC DNA]</scope>
    <source>
        <strain>NBRC 3956 / LMG 18251</strain>
    </source>
</reference>
<feature type="chain" id="PRO_1000091005" description="Aspartate--tRNA ligase">
    <location>
        <begin position="1"/>
        <end position="591"/>
    </location>
</feature>
<feature type="region of interest" description="Aspartate" evidence="1">
    <location>
        <begin position="197"/>
        <end position="200"/>
    </location>
</feature>
<feature type="binding site" evidence="1">
    <location>
        <position position="173"/>
    </location>
    <ligand>
        <name>L-aspartate</name>
        <dbReference type="ChEBI" id="CHEBI:29991"/>
    </ligand>
</feature>
<feature type="binding site" evidence="1">
    <location>
        <begin position="219"/>
        <end position="221"/>
    </location>
    <ligand>
        <name>ATP</name>
        <dbReference type="ChEBI" id="CHEBI:30616"/>
    </ligand>
</feature>
<feature type="binding site" evidence="1">
    <location>
        <position position="219"/>
    </location>
    <ligand>
        <name>L-aspartate</name>
        <dbReference type="ChEBI" id="CHEBI:29991"/>
    </ligand>
</feature>
<feature type="binding site" evidence="1">
    <location>
        <position position="228"/>
    </location>
    <ligand>
        <name>ATP</name>
        <dbReference type="ChEBI" id="CHEBI:30616"/>
    </ligand>
</feature>
<feature type="binding site" evidence="1">
    <location>
        <position position="446"/>
    </location>
    <ligand>
        <name>L-aspartate</name>
        <dbReference type="ChEBI" id="CHEBI:29991"/>
    </ligand>
</feature>
<feature type="binding site" evidence="1">
    <location>
        <position position="482"/>
    </location>
    <ligand>
        <name>ATP</name>
        <dbReference type="ChEBI" id="CHEBI:30616"/>
    </ligand>
</feature>
<feature type="binding site" evidence="1">
    <location>
        <position position="489"/>
    </location>
    <ligand>
        <name>L-aspartate</name>
        <dbReference type="ChEBI" id="CHEBI:29991"/>
    </ligand>
</feature>
<feature type="binding site" evidence="1">
    <location>
        <begin position="534"/>
        <end position="537"/>
    </location>
    <ligand>
        <name>ATP</name>
        <dbReference type="ChEBI" id="CHEBI:30616"/>
    </ligand>
</feature>
<evidence type="ECO:0000255" key="1">
    <source>
        <dbReference type="HAMAP-Rule" id="MF_00044"/>
    </source>
</evidence>